<comment type="function">
    <text evidence="1">Catalyzes the condensation of carbamoyl phosphate and aspartate to form carbamoyl aspartate and inorganic phosphate, the committed step in the de novo pyrimidine nucleotide biosynthesis pathway.</text>
</comment>
<comment type="catalytic activity">
    <reaction evidence="1">
        <text>carbamoyl phosphate + L-aspartate = N-carbamoyl-L-aspartate + phosphate + H(+)</text>
        <dbReference type="Rhea" id="RHEA:20013"/>
        <dbReference type="ChEBI" id="CHEBI:15378"/>
        <dbReference type="ChEBI" id="CHEBI:29991"/>
        <dbReference type="ChEBI" id="CHEBI:32814"/>
        <dbReference type="ChEBI" id="CHEBI:43474"/>
        <dbReference type="ChEBI" id="CHEBI:58228"/>
        <dbReference type="EC" id="2.1.3.2"/>
    </reaction>
</comment>
<comment type="pathway">
    <text evidence="1">Pyrimidine metabolism; UMP biosynthesis via de novo pathway; (S)-dihydroorotate from bicarbonate: step 2/3.</text>
</comment>
<comment type="subunit">
    <text evidence="1">Heterooligomer of catalytic and regulatory chains.</text>
</comment>
<comment type="similarity">
    <text evidence="1">Belongs to the aspartate/ornithine carbamoyltransferase superfamily. ATCase family.</text>
</comment>
<dbReference type="EC" id="2.1.3.2" evidence="1"/>
<dbReference type="EMBL" id="CP000855">
    <property type="protein sequence ID" value="ACJ16927.1"/>
    <property type="molecule type" value="Genomic_DNA"/>
</dbReference>
<dbReference type="RefSeq" id="WP_012572399.1">
    <property type="nucleotide sequence ID" value="NC_011529.1"/>
</dbReference>
<dbReference type="SMR" id="B6YXW4"/>
<dbReference type="STRING" id="523850.TON_1437"/>
<dbReference type="GeneID" id="7018471"/>
<dbReference type="KEGG" id="ton:TON_1437"/>
<dbReference type="PATRIC" id="fig|523850.10.peg.1448"/>
<dbReference type="eggNOG" id="arCOG00911">
    <property type="taxonomic scope" value="Archaea"/>
</dbReference>
<dbReference type="HOGENOM" id="CLU_043846_1_2_2"/>
<dbReference type="OrthoDB" id="7792at2157"/>
<dbReference type="UniPathway" id="UPA00070">
    <property type="reaction ID" value="UER00116"/>
</dbReference>
<dbReference type="Proteomes" id="UP000002727">
    <property type="component" value="Chromosome"/>
</dbReference>
<dbReference type="GO" id="GO:0016597">
    <property type="term" value="F:amino acid binding"/>
    <property type="evidence" value="ECO:0007669"/>
    <property type="project" value="InterPro"/>
</dbReference>
<dbReference type="GO" id="GO:0004070">
    <property type="term" value="F:aspartate carbamoyltransferase activity"/>
    <property type="evidence" value="ECO:0007669"/>
    <property type="project" value="UniProtKB-UniRule"/>
</dbReference>
<dbReference type="GO" id="GO:0006207">
    <property type="term" value="P:'de novo' pyrimidine nucleobase biosynthetic process"/>
    <property type="evidence" value="ECO:0007669"/>
    <property type="project" value="InterPro"/>
</dbReference>
<dbReference type="GO" id="GO:0044205">
    <property type="term" value="P:'de novo' UMP biosynthetic process"/>
    <property type="evidence" value="ECO:0007669"/>
    <property type="project" value="UniProtKB-UniRule"/>
</dbReference>
<dbReference type="GO" id="GO:0006520">
    <property type="term" value="P:amino acid metabolic process"/>
    <property type="evidence" value="ECO:0007669"/>
    <property type="project" value="InterPro"/>
</dbReference>
<dbReference type="FunFam" id="3.40.50.1370:FF:000001">
    <property type="entry name" value="Aspartate carbamoyltransferase"/>
    <property type="match status" value="1"/>
</dbReference>
<dbReference type="FunFam" id="3.40.50.1370:FF:000021">
    <property type="entry name" value="Aspartate carbamoyltransferase"/>
    <property type="match status" value="1"/>
</dbReference>
<dbReference type="Gene3D" id="3.40.50.1370">
    <property type="entry name" value="Aspartate/ornithine carbamoyltransferase"/>
    <property type="match status" value="2"/>
</dbReference>
<dbReference type="HAMAP" id="MF_00001">
    <property type="entry name" value="Asp_carb_tr"/>
    <property type="match status" value="1"/>
</dbReference>
<dbReference type="InterPro" id="IPR006132">
    <property type="entry name" value="Asp/Orn_carbamoyltranf_P-bd"/>
</dbReference>
<dbReference type="InterPro" id="IPR006130">
    <property type="entry name" value="Asp/Orn_carbamoylTrfase"/>
</dbReference>
<dbReference type="InterPro" id="IPR036901">
    <property type="entry name" value="Asp/Orn_carbamoylTrfase_sf"/>
</dbReference>
<dbReference type="InterPro" id="IPR002082">
    <property type="entry name" value="Asp_carbamoyltransf"/>
</dbReference>
<dbReference type="InterPro" id="IPR006131">
    <property type="entry name" value="Asp_carbamoyltransf_Asp/Orn-bd"/>
</dbReference>
<dbReference type="NCBIfam" id="TIGR00670">
    <property type="entry name" value="asp_carb_tr"/>
    <property type="match status" value="1"/>
</dbReference>
<dbReference type="NCBIfam" id="NF002032">
    <property type="entry name" value="PRK00856.1"/>
    <property type="match status" value="1"/>
</dbReference>
<dbReference type="PANTHER" id="PTHR45753:SF6">
    <property type="entry name" value="ASPARTATE CARBAMOYLTRANSFERASE"/>
    <property type="match status" value="1"/>
</dbReference>
<dbReference type="PANTHER" id="PTHR45753">
    <property type="entry name" value="ORNITHINE CARBAMOYLTRANSFERASE, MITOCHONDRIAL"/>
    <property type="match status" value="1"/>
</dbReference>
<dbReference type="Pfam" id="PF00185">
    <property type="entry name" value="OTCace"/>
    <property type="match status" value="1"/>
</dbReference>
<dbReference type="Pfam" id="PF02729">
    <property type="entry name" value="OTCace_N"/>
    <property type="match status" value="1"/>
</dbReference>
<dbReference type="PRINTS" id="PR00100">
    <property type="entry name" value="AOTCASE"/>
</dbReference>
<dbReference type="PRINTS" id="PR00101">
    <property type="entry name" value="ATCASE"/>
</dbReference>
<dbReference type="SUPFAM" id="SSF53671">
    <property type="entry name" value="Aspartate/ornithine carbamoyltransferase"/>
    <property type="match status" value="1"/>
</dbReference>
<dbReference type="PROSITE" id="PS00097">
    <property type="entry name" value="CARBAMOYLTRANSFERASE"/>
    <property type="match status" value="1"/>
</dbReference>
<organism>
    <name type="scientific">Thermococcus onnurineus (strain NA1)</name>
    <dbReference type="NCBI Taxonomy" id="523850"/>
    <lineage>
        <taxon>Archaea</taxon>
        <taxon>Methanobacteriati</taxon>
        <taxon>Methanobacteriota</taxon>
        <taxon>Thermococci</taxon>
        <taxon>Thermococcales</taxon>
        <taxon>Thermococcaceae</taxon>
        <taxon>Thermococcus</taxon>
    </lineage>
</organism>
<protein>
    <recommendedName>
        <fullName evidence="1">Aspartate carbamoyltransferase catalytic subunit</fullName>
        <ecNumber evidence="1">2.1.3.2</ecNumber>
    </recommendedName>
    <alternativeName>
        <fullName evidence="1">Aspartate transcarbamylase</fullName>
        <shortName evidence="1">ATCase</shortName>
    </alternativeName>
</protein>
<reference key="1">
    <citation type="journal article" date="2008" name="J. Bacteriol.">
        <title>The complete genome sequence of Thermococcus onnurineus NA1 reveals a mixed heterotrophic and carboxydotrophic metabolism.</title>
        <authorList>
            <person name="Lee H.S."/>
            <person name="Kang S.G."/>
            <person name="Bae S.S."/>
            <person name="Lim J.K."/>
            <person name="Cho Y."/>
            <person name="Kim Y.J."/>
            <person name="Jeon J.H."/>
            <person name="Cha S.-S."/>
            <person name="Kwon K.K."/>
            <person name="Kim H.-T."/>
            <person name="Park C.-J."/>
            <person name="Lee H.-W."/>
            <person name="Kim S.I."/>
            <person name="Chun J."/>
            <person name="Colwell R.R."/>
            <person name="Kim S.-J."/>
            <person name="Lee J.-H."/>
        </authorList>
    </citation>
    <scope>NUCLEOTIDE SEQUENCE [LARGE SCALE GENOMIC DNA]</scope>
    <source>
        <strain>NA1</strain>
    </source>
</reference>
<keyword id="KW-0665">Pyrimidine biosynthesis</keyword>
<keyword id="KW-0808">Transferase</keyword>
<sequence length="310" mass="34907">MEWKGRDVISVRDFSKEDIEFVLKIAERLEERLNKKGHLEYARGKILATLFFEPSTRTRLSFESAMHRLGGSVIGFSSAASTSVKKGESLADTIKTVEQYSDVIVIRHPMEGAARLAAEVAEIPVINAGDGSNQHPTQTLLDLYTIKRAFGRIDGLRIGLLGDLKYGRTVHSLAEALAFYDVELYLISPELLRMPKHIVEELREKGVKVHETTDLEGTVPELDVLYVTRIQRERFPDEQEYLKVKGSYQVNCAVLKNAKESLKIMHPLPRVDEIHPEVDRTPHALYFRQVFSGVPVRMALLGLTLGVLEG</sequence>
<feature type="chain" id="PRO_1000088812" description="Aspartate carbamoyltransferase catalytic subunit">
    <location>
        <begin position="1"/>
        <end position="310"/>
    </location>
</feature>
<feature type="binding site" evidence="1">
    <location>
        <position position="57"/>
    </location>
    <ligand>
        <name>carbamoyl phosphate</name>
        <dbReference type="ChEBI" id="CHEBI:58228"/>
    </ligand>
</feature>
<feature type="binding site" evidence="1">
    <location>
        <position position="58"/>
    </location>
    <ligand>
        <name>carbamoyl phosphate</name>
        <dbReference type="ChEBI" id="CHEBI:58228"/>
    </ligand>
</feature>
<feature type="binding site" evidence="1">
    <location>
        <position position="86"/>
    </location>
    <ligand>
        <name>L-aspartate</name>
        <dbReference type="ChEBI" id="CHEBI:29991"/>
    </ligand>
</feature>
<feature type="binding site" evidence="1">
    <location>
        <position position="107"/>
    </location>
    <ligand>
        <name>carbamoyl phosphate</name>
        <dbReference type="ChEBI" id="CHEBI:58228"/>
    </ligand>
</feature>
<feature type="binding site" evidence="1">
    <location>
        <position position="135"/>
    </location>
    <ligand>
        <name>carbamoyl phosphate</name>
        <dbReference type="ChEBI" id="CHEBI:58228"/>
    </ligand>
</feature>
<feature type="binding site" evidence="1">
    <location>
        <position position="138"/>
    </location>
    <ligand>
        <name>carbamoyl phosphate</name>
        <dbReference type="ChEBI" id="CHEBI:58228"/>
    </ligand>
</feature>
<feature type="binding site" evidence="1">
    <location>
        <position position="168"/>
    </location>
    <ligand>
        <name>L-aspartate</name>
        <dbReference type="ChEBI" id="CHEBI:29991"/>
    </ligand>
</feature>
<feature type="binding site" evidence="1">
    <location>
        <position position="229"/>
    </location>
    <ligand>
        <name>L-aspartate</name>
        <dbReference type="ChEBI" id="CHEBI:29991"/>
    </ligand>
</feature>
<feature type="binding site" evidence="1">
    <location>
        <position position="268"/>
    </location>
    <ligand>
        <name>carbamoyl phosphate</name>
        <dbReference type="ChEBI" id="CHEBI:58228"/>
    </ligand>
</feature>
<feature type="binding site" evidence="1">
    <location>
        <position position="269"/>
    </location>
    <ligand>
        <name>carbamoyl phosphate</name>
        <dbReference type="ChEBI" id="CHEBI:58228"/>
    </ligand>
</feature>
<accession>B6YXW4</accession>
<proteinExistence type="inferred from homology"/>
<evidence type="ECO:0000255" key="1">
    <source>
        <dbReference type="HAMAP-Rule" id="MF_00001"/>
    </source>
</evidence>
<gene>
    <name evidence="1" type="primary">pyrB</name>
    <name type="ordered locus">TON_1437</name>
</gene>
<name>PYRB_THEON</name>